<name>LLDD_ECOHS</name>
<reference key="1">
    <citation type="journal article" date="2008" name="J. Bacteriol.">
        <title>The pangenome structure of Escherichia coli: comparative genomic analysis of E. coli commensal and pathogenic isolates.</title>
        <authorList>
            <person name="Rasko D.A."/>
            <person name="Rosovitz M.J."/>
            <person name="Myers G.S.A."/>
            <person name="Mongodin E.F."/>
            <person name="Fricke W.F."/>
            <person name="Gajer P."/>
            <person name="Crabtree J."/>
            <person name="Sebaihia M."/>
            <person name="Thomson N.R."/>
            <person name="Chaudhuri R."/>
            <person name="Henderson I.R."/>
            <person name="Sperandio V."/>
            <person name="Ravel J."/>
        </authorList>
    </citation>
    <scope>NUCLEOTIDE SEQUENCE [LARGE SCALE GENOMIC DNA]</scope>
    <source>
        <strain>HS</strain>
    </source>
</reference>
<keyword id="KW-0997">Cell inner membrane</keyword>
<keyword id="KW-1003">Cell membrane</keyword>
<keyword id="KW-0285">Flavoprotein</keyword>
<keyword id="KW-0288">FMN</keyword>
<keyword id="KW-0472">Membrane</keyword>
<keyword id="KW-0560">Oxidoreductase</keyword>
<protein>
    <recommendedName>
        <fullName evidence="1">L-lactate dehydrogenase</fullName>
        <ecNumber evidence="1">1.1.-.-</ecNumber>
    </recommendedName>
</protein>
<gene>
    <name evidence="1" type="primary">lldD</name>
    <name type="ordered locus">EcHS_A3817</name>
</gene>
<dbReference type="EC" id="1.1.-.-" evidence="1"/>
<dbReference type="EMBL" id="CP000802">
    <property type="protein sequence ID" value="ABV08024.1"/>
    <property type="molecule type" value="Genomic_DNA"/>
</dbReference>
<dbReference type="RefSeq" id="WP_000586962.1">
    <property type="nucleotide sequence ID" value="NC_009800.1"/>
</dbReference>
<dbReference type="SMR" id="A8A670"/>
<dbReference type="KEGG" id="ecx:EcHS_A3817"/>
<dbReference type="HOGENOM" id="CLU_020639_0_0_6"/>
<dbReference type="GO" id="GO:0005886">
    <property type="term" value="C:plasma membrane"/>
    <property type="evidence" value="ECO:0007669"/>
    <property type="project" value="UniProtKB-SubCell"/>
</dbReference>
<dbReference type="GO" id="GO:0010181">
    <property type="term" value="F:FMN binding"/>
    <property type="evidence" value="ECO:0007669"/>
    <property type="project" value="InterPro"/>
</dbReference>
<dbReference type="GO" id="GO:0004459">
    <property type="term" value="F:L-lactate dehydrogenase activity"/>
    <property type="evidence" value="ECO:0007669"/>
    <property type="project" value="UniProtKB-UniRule"/>
</dbReference>
<dbReference type="GO" id="GO:0009060">
    <property type="term" value="P:aerobic respiration"/>
    <property type="evidence" value="ECO:0007669"/>
    <property type="project" value="TreeGrafter"/>
</dbReference>
<dbReference type="GO" id="GO:0006089">
    <property type="term" value="P:lactate metabolic process"/>
    <property type="evidence" value="ECO:0007669"/>
    <property type="project" value="UniProtKB-UniRule"/>
</dbReference>
<dbReference type="CDD" id="cd02809">
    <property type="entry name" value="alpha_hydroxyacid_oxid_FMN"/>
    <property type="match status" value="1"/>
</dbReference>
<dbReference type="FunFam" id="3.20.20.70:FF:000029">
    <property type="entry name" value="L-lactate dehydrogenase"/>
    <property type="match status" value="1"/>
</dbReference>
<dbReference type="Gene3D" id="3.20.20.70">
    <property type="entry name" value="Aldolase class I"/>
    <property type="match status" value="1"/>
</dbReference>
<dbReference type="HAMAP" id="MF_01559">
    <property type="entry name" value="L_lact_dehydr"/>
    <property type="match status" value="1"/>
</dbReference>
<dbReference type="InterPro" id="IPR013785">
    <property type="entry name" value="Aldolase_TIM"/>
</dbReference>
<dbReference type="InterPro" id="IPR012133">
    <property type="entry name" value="Alpha-hydoxy_acid_DH_FMN"/>
</dbReference>
<dbReference type="InterPro" id="IPR000262">
    <property type="entry name" value="FMN-dep_DH"/>
</dbReference>
<dbReference type="InterPro" id="IPR037396">
    <property type="entry name" value="FMN_HAD"/>
</dbReference>
<dbReference type="InterPro" id="IPR008259">
    <property type="entry name" value="FMN_hydac_DH_AS"/>
</dbReference>
<dbReference type="InterPro" id="IPR020920">
    <property type="entry name" value="LldD"/>
</dbReference>
<dbReference type="NCBIfam" id="NF033901">
    <property type="entry name" value="L_lactate_LldD"/>
    <property type="match status" value="1"/>
</dbReference>
<dbReference type="NCBIfam" id="NF008398">
    <property type="entry name" value="PRK11197.1"/>
    <property type="match status" value="1"/>
</dbReference>
<dbReference type="PANTHER" id="PTHR10578:SF85">
    <property type="entry name" value="L-LACTATE DEHYDROGENASE"/>
    <property type="match status" value="1"/>
</dbReference>
<dbReference type="PANTHER" id="PTHR10578">
    <property type="entry name" value="S -2-HYDROXY-ACID OXIDASE-RELATED"/>
    <property type="match status" value="1"/>
</dbReference>
<dbReference type="Pfam" id="PF01070">
    <property type="entry name" value="FMN_dh"/>
    <property type="match status" value="1"/>
</dbReference>
<dbReference type="PIRSF" id="PIRSF000138">
    <property type="entry name" value="Al-hdrx_acd_dh"/>
    <property type="match status" value="1"/>
</dbReference>
<dbReference type="SUPFAM" id="SSF51395">
    <property type="entry name" value="FMN-linked oxidoreductases"/>
    <property type="match status" value="1"/>
</dbReference>
<dbReference type="PROSITE" id="PS00557">
    <property type="entry name" value="FMN_HYDROXY_ACID_DH_1"/>
    <property type="match status" value="1"/>
</dbReference>
<dbReference type="PROSITE" id="PS51349">
    <property type="entry name" value="FMN_HYDROXY_ACID_DH_2"/>
    <property type="match status" value="1"/>
</dbReference>
<feature type="chain" id="PRO_1000068980" description="L-lactate dehydrogenase">
    <location>
        <begin position="1"/>
        <end position="396"/>
    </location>
</feature>
<feature type="domain" description="FMN hydroxy acid dehydrogenase" evidence="1">
    <location>
        <begin position="1"/>
        <end position="380"/>
    </location>
</feature>
<feature type="active site" description="Proton acceptor" evidence="1">
    <location>
        <position position="275"/>
    </location>
</feature>
<feature type="binding site" evidence="1">
    <location>
        <position position="24"/>
    </location>
    <ligand>
        <name>substrate</name>
    </ligand>
</feature>
<feature type="binding site" evidence="1">
    <location>
        <position position="106"/>
    </location>
    <ligand>
        <name>FMN</name>
        <dbReference type="ChEBI" id="CHEBI:58210"/>
    </ligand>
</feature>
<feature type="binding site" evidence="1">
    <location>
        <position position="127"/>
    </location>
    <ligand>
        <name>FMN</name>
        <dbReference type="ChEBI" id="CHEBI:58210"/>
    </ligand>
</feature>
<feature type="binding site" evidence="1">
    <location>
        <position position="129"/>
    </location>
    <ligand>
        <name>substrate</name>
    </ligand>
</feature>
<feature type="binding site" evidence="1">
    <location>
        <position position="155"/>
    </location>
    <ligand>
        <name>FMN</name>
        <dbReference type="ChEBI" id="CHEBI:58210"/>
    </ligand>
</feature>
<feature type="binding site" evidence="1">
    <location>
        <position position="164"/>
    </location>
    <ligand>
        <name>substrate</name>
    </ligand>
</feature>
<feature type="binding site" evidence="1">
    <location>
        <position position="251"/>
    </location>
    <ligand>
        <name>FMN</name>
        <dbReference type="ChEBI" id="CHEBI:58210"/>
    </ligand>
</feature>
<feature type="binding site" evidence="1">
    <location>
        <position position="278"/>
    </location>
    <ligand>
        <name>substrate</name>
    </ligand>
</feature>
<feature type="binding site" evidence="1">
    <location>
        <begin position="306"/>
        <end position="330"/>
    </location>
    <ligand>
        <name>FMN</name>
        <dbReference type="ChEBI" id="CHEBI:58210"/>
    </ligand>
</feature>
<comment type="function">
    <text evidence="1">Catalyzes the conversion of L-lactate to pyruvate. Is coupled to the respiratory chain.</text>
</comment>
<comment type="catalytic activity">
    <reaction evidence="1">
        <text>(S)-lactate + A = pyruvate + AH2</text>
        <dbReference type="Rhea" id="RHEA:45816"/>
        <dbReference type="ChEBI" id="CHEBI:13193"/>
        <dbReference type="ChEBI" id="CHEBI:15361"/>
        <dbReference type="ChEBI" id="CHEBI:16651"/>
        <dbReference type="ChEBI" id="CHEBI:17499"/>
    </reaction>
</comment>
<comment type="cofactor">
    <cofactor evidence="1">
        <name>FMN</name>
        <dbReference type="ChEBI" id="CHEBI:58210"/>
    </cofactor>
</comment>
<comment type="subcellular location">
    <subcellularLocation>
        <location evidence="1">Cell inner membrane</location>
        <topology evidence="1">Peripheral membrane protein</topology>
    </subcellularLocation>
</comment>
<comment type="similarity">
    <text evidence="1">Belongs to the FMN-dependent alpha-hydroxy acid dehydrogenase family.</text>
</comment>
<sequence>MIISAASDYRAAAQRILPPFLFHYMDGGAYSEYTLRRNVEDLSEVALRQRILKNMSDLSLETTLFNEKLSMPVALAPVGLCGMYARRGEVQAAKAADAHGIPFTLSTVSVCPIEEVAPAIKRPMWFQLYVLRDRGFMRNALERAKAAGCSTLVFTVDMPTPGARYRDAHSGMSGPNAAMRRYLQAVTHPQWAWDVGLNGRPHDLGNISAYLGKPTGLEDYIGWLGNNFDPSISWKDLEWIRDFWDGPMVIKGILDPEDARDAVRFGADGIVVSNHGGRQLDGVLSSARALPAIADAVKGDIAILADSGIRNGLDVVRMIALGADTVLLGRAFLYALATAGQAGVANLLNLIEKEMKVAMTLTGAKSISEITQDSLVQGLGKELPAALAPMAKGNAA</sequence>
<evidence type="ECO:0000255" key="1">
    <source>
        <dbReference type="HAMAP-Rule" id="MF_01559"/>
    </source>
</evidence>
<accession>A8A670</accession>
<proteinExistence type="inferred from homology"/>
<organism>
    <name type="scientific">Escherichia coli O9:H4 (strain HS)</name>
    <dbReference type="NCBI Taxonomy" id="331112"/>
    <lineage>
        <taxon>Bacteria</taxon>
        <taxon>Pseudomonadati</taxon>
        <taxon>Pseudomonadota</taxon>
        <taxon>Gammaproteobacteria</taxon>
        <taxon>Enterobacterales</taxon>
        <taxon>Enterobacteriaceae</taxon>
        <taxon>Escherichia</taxon>
    </lineage>
</organism>